<keyword id="KW-0378">Hydrolase</keyword>
<keyword id="KW-0663">Pyridoxal phosphate</keyword>
<name>1A1D_RALPJ</name>
<evidence type="ECO:0000255" key="1">
    <source>
        <dbReference type="HAMAP-Rule" id="MF_00807"/>
    </source>
</evidence>
<feature type="chain" id="PRO_1000134013" description="1-aminocyclopropane-1-carboxylate deaminase">
    <location>
        <begin position="1"/>
        <end position="338"/>
    </location>
</feature>
<feature type="active site" description="Nucleophile" evidence="1">
    <location>
        <position position="78"/>
    </location>
</feature>
<feature type="modified residue" description="N6-(pyridoxal phosphate)lysine" evidence="1">
    <location>
        <position position="51"/>
    </location>
</feature>
<gene>
    <name evidence="1" type="primary">acdS</name>
    <name type="ordered locus">Rpic_2004</name>
</gene>
<organism>
    <name type="scientific">Ralstonia pickettii (strain 12J)</name>
    <dbReference type="NCBI Taxonomy" id="402626"/>
    <lineage>
        <taxon>Bacteria</taxon>
        <taxon>Pseudomonadati</taxon>
        <taxon>Pseudomonadota</taxon>
        <taxon>Betaproteobacteria</taxon>
        <taxon>Burkholderiales</taxon>
        <taxon>Burkholderiaceae</taxon>
        <taxon>Ralstonia</taxon>
    </lineage>
</organism>
<comment type="function">
    <text evidence="1">Catalyzes a cyclopropane ring-opening reaction, the irreversible conversion of 1-aminocyclopropane-1-carboxylate (ACC) to ammonia and alpha-ketobutyrate. Allows growth on ACC as a nitrogen source.</text>
</comment>
<comment type="catalytic activity">
    <reaction evidence="1">
        <text>1-aminocyclopropane-1-carboxylate + H2O = 2-oxobutanoate + NH4(+)</text>
        <dbReference type="Rhea" id="RHEA:16933"/>
        <dbReference type="ChEBI" id="CHEBI:15377"/>
        <dbReference type="ChEBI" id="CHEBI:16763"/>
        <dbReference type="ChEBI" id="CHEBI:28938"/>
        <dbReference type="ChEBI" id="CHEBI:58360"/>
        <dbReference type="EC" id="3.5.99.7"/>
    </reaction>
</comment>
<comment type="cofactor">
    <cofactor evidence="1">
        <name>pyridoxal 5'-phosphate</name>
        <dbReference type="ChEBI" id="CHEBI:597326"/>
    </cofactor>
</comment>
<comment type="subunit">
    <text evidence="1">Homotrimer.</text>
</comment>
<comment type="similarity">
    <text evidence="1">Belongs to the ACC deaminase/D-cysteine desulfhydrase family.</text>
</comment>
<reference key="1">
    <citation type="submission" date="2008-05" db="EMBL/GenBank/DDBJ databases">
        <title>Complete sequence of chromosome 1 of Ralstonia pickettii 12J.</title>
        <authorList>
            <person name="Lucas S."/>
            <person name="Copeland A."/>
            <person name="Lapidus A."/>
            <person name="Glavina del Rio T."/>
            <person name="Dalin E."/>
            <person name="Tice H."/>
            <person name="Bruce D."/>
            <person name="Goodwin L."/>
            <person name="Pitluck S."/>
            <person name="Meincke L."/>
            <person name="Brettin T."/>
            <person name="Detter J.C."/>
            <person name="Han C."/>
            <person name="Kuske C.R."/>
            <person name="Schmutz J."/>
            <person name="Larimer F."/>
            <person name="Land M."/>
            <person name="Hauser L."/>
            <person name="Kyrpides N."/>
            <person name="Mikhailova N."/>
            <person name="Marsh T."/>
            <person name="Richardson P."/>
        </authorList>
    </citation>
    <scope>NUCLEOTIDE SEQUENCE [LARGE SCALE GENOMIC DNA]</scope>
    <source>
        <strain>12J</strain>
    </source>
</reference>
<sequence>MNLQRFPRYPLTFGPTPIQPLKRLSAHLGGKVELFAKREDCNSGLAFGGNKTRKLEYLIPEALEGGYDTLVSIGGIQSNQTRQVAAVAAHLGLKCVLVQENWVNYSDAVYDRVGNIEMSRIMGADVRLDSAGFDIGIRPSWEQAMDDVRKRGGKPFPIPAGCSEHPLGGLGFVGFAEEVRQQEAELGFKFDYIVVCSVTGSTQAGMVVGFAADGRADKVIGIDASAKPEQTRAQILRIAQHTAELVDLGRNITERDVVLDTRYGGPEYGLPNEGTLEAIRLCARQEAMLTDPVYEGKSMHGMIDMVRNGEFPAGSRVLYAHLGGVPALNAYSFIFRNG</sequence>
<protein>
    <recommendedName>
        <fullName evidence="1">1-aminocyclopropane-1-carboxylate deaminase</fullName>
        <shortName evidence="1">ACC deaminase</shortName>
        <shortName evidence="1">ACCD</shortName>
        <ecNumber evidence="1">3.5.99.7</ecNumber>
    </recommendedName>
</protein>
<dbReference type="EC" id="3.5.99.7" evidence="1"/>
<dbReference type="EMBL" id="CP001068">
    <property type="protein sequence ID" value="ACD27139.1"/>
    <property type="molecule type" value="Genomic_DNA"/>
</dbReference>
<dbReference type="SMR" id="B2UGM5"/>
<dbReference type="KEGG" id="rpi:Rpic_2004"/>
<dbReference type="PATRIC" id="fig|402626.5.peg.3156"/>
<dbReference type="eggNOG" id="COG2515">
    <property type="taxonomic scope" value="Bacteria"/>
</dbReference>
<dbReference type="HOGENOM" id="CLU_048897_2_1_4"/>
<dbReference type="GO" id="GO:0008660">
    <property type="term" value="F:1-aminocyclopropane-1-carboxylate deaminase activity"/>
    <property type="evidence" value="ECO:0007669"/>
    <property type="project" value="UniProtKB-UniRule"/>
</dbReference>
<dbReference type="GO" id="GO:0019148">
    <property type="term" value="F:D-cysteine desulfhydrase activity"/>
    <property type="evidence" value="ECO:0007669"/>
    <property type="project" value="TreeGrafter"/>
</dbReference>
<dbReference type="GO" id="GO:0030170">
    <property type="term" value="F:pyridoxal phosphate binding"/>
    <property type="evidence" value="ECO:0007669"/>
    <property type="project" value="InterPro"/>
</dbReference>
<dbReference type="GO" id="GO:0018871">
    <property type="term" value="P:1-aminocyclopropane-1-carboxylate metabolic process"/>
    <property type="evidence" value="ECO:0007669"/>
    <property type="project" value="UniProtKB-UniRule"/>
</dbReference>
<dbReference type="GO" id="GO:0009310">
    <property type="term" value="P:amine catabolic process"/>
    <property type="evidence" value="ECO:0007669"/>
    <property type="project" value="InterPro"/>
</dbReference>
<dbReference type="CDD" id="cd06449">
    <property type="entry name" value="ACCD"/>
    <property type="match status" value="1"/>
</dbReference>
<dbReference type="FunFam" id="3.40.50.1100:FF:000048">
    <property type="entry name" value="1-aminocyclopropane-1-carboxylate deaminase"/>
    <property type="match status" value="1"/>
</dbReference>
<dbReference type="FunFam" id="3.40.50.1100:FF:000053">
    <property type="entry name" value="1-aminocyclopropane-1-carboxylate deaminase"/>
    <property type="match status" value="1"/>
</dbReference>
<dbReference type="Gene3D" id="3.40.50.1100">
    <property type="match status" value="2"/>
</dbReference>
<dbReference type="HAMAP" id="MF_00807">
    <property type="entry name" value="ACC_deaminase"/>
    <property type="match status" value="1"/>
</dbReference>
<dbReference type="InterPro" id="IPR027278">
    <property type="entry name" value="ACCD_DCysDesulf"/>
</dbReference>
<dbReference type="InterPro" id="IPR005965">
    <property type="entry name" value="ACP_carboxylate_deaminase"/>
</dbReference>
<dbReference type="InterPro" id="IPR020601">
    <property type="entry name" value="ACP_carboxylate_deaminase_bac"/>
</dbReference>
<dbReference type="InterPro" id="IPR001926">
    <property type="entry name" value="TrpB-like_PALP"/>
</dbReference>
<dbReference type="InterPro" id="IPR036052">
    <property type="entry name" value="TrpB-like_PALP_sf"/>
</dbReference>
<dbReference type="NCBIfam" id="TIGR01274">
    <property type="entry name" value="ACC_deam"/>
    <property type="match status" value="1"/>
</dbReference>
<dbReference type="PANTHER" id="PTHR43780">
    <property type="entry name" value="1-AMINOCYCLOPROPANE-1-CARBOXYLATE DEAMINASE-RELATED"/>
    <property type="match status" value="1"/>
</dbReference>
<dbReference type="PANTHER" id="PTHR43780:SF2">
    <property type="entry name" value="1-AMINOCYCLOPROPANE-1-CARBOXYLATE DEAMINASE-RELATED"/>
    <property type="match status" value="1"/>
</dbReference>
<dbReference type="Pfam" id="PF00291">
    <property type="entry name" value="PALP"/>
    <property type="match status" value="1"/>
</dbReference>
<dbReference type="PIRSF" id="PIRSF006278">
    <property type="entry name" value="ACCD_DCysDesulf"/>
    <property type="match status" value="1"/>
</dbReference>
<dbReference type="SUPFAM" id="SSF53686">
    <property type="entry name" value="Tryptophan synthase beta subunit-like PLP-dependent enzymes"/>
    <property type="match status" value="1"/>
</dbReference>
<accession>B2UGM5</accession>
<proteinExistence type="inferred from homology"/>